<name>KCY_ACIBT</name>
<sequence>MTVQIITIDGPSGSGKGTLAAKLAAYYQFHLLDSGALYRLLGLSLHKHDLLEKLDSHLDECVNYARQLNIKFETSAEGTLVFLDGEDVTQTIRTERVGEYASKVAAIPELRQALFERQRAFAQTPGLVADGRDMATSIFPEANAKIYLTASAESRAERRVKQLQGMGLDAKINDILANIQARDKRDMEREVAPLKPAADAYIIDSSELTIDQVFKLMVDYVNSRTVSN</sequence>
<proteinExistence type="inferred from homology"/>
<evidence type="ECO:0000255" key="1">
    <source>
        <dbReference type="HAMAP-Rule" id="MF_00238"/>
    </source>
</evidence>
<feature type="chain" id="PRO_1000100641" description="Cytidylate kinase">
    <location>
        <begin position="1"/>
        <end position="228"/>
    </location>
</feature>
<feature type="binding site" evidence="1">
    <location>
        <begin position="10"/>
        <end position="18"/>
    </location>
    <ligand>
        <name>ATP</name>
        <dbReference type="ChEBI" id="CHEBI:30616"/>
    </ligand>
</feature>
<dbReference type="EC" id="2.7.4.25" evidence="1"/>
<dbReference type="EMBL" id="CP000521">
    <property type="protein sequence ID" value="ABO11998.2"/>
    <property type="molecule type" value="Genomic_DNA"/>
</dbReference>
<dbReference type="RefSeq" id="WP_000218018.1">
    <property type="nucleotide sequence ID" value="NZ_CP053098.1"/>
</dbReference>
<dbReference type="SMR" id="A3M504"/>
<dbReference type="GeneID" id="92893800"/>
<dbReference type="KEGG" id="acb:A1S_1571"/>
<dbReference type="HOGENOM" id="CLU_079959_2_0_6"/>
<dbReference type="GO" id="GO:0005829">
    <property type="term" value="C:cytosol"/>
    <property type="evidence" value="ECO:0007669"/>
    <property type="project" value="TreeGrafter"/>
</dbReference>
<dbReference type="GO" id="GO:0005524">
    <property type="term" value="F:ATP binding"/>
    <property type="evidence" value="ECO:0007669"/>
    <property type="project" value="UniProtKB-UniRule"/>
</dbReference>
<dbReference type="GO" id="GO:0036430">
    <property type="term" value="F:CMP kinase activity"/>
    <property type="evidence" value="ECO:0007669"/>
    <property type="project" value="RHEA"/>
</dbReference>
<dbReference type="GO" id="GO:0036431">
    <property type="term" value="F:dCMP kinase activity"/>
    <property type="evidence" value="ECO:0007669"/>
    <property type="project" value="RHEA"/>
</dbReference>
<dbReference type="GO" id="GO:0015949">
    <property type="term" value="P:nucleobase-containing small molecule interconversion"/>
    <property type="evidence" value="ECO:0007669"/>
    <property type="project" value="TreeGrafter"/>
</dbReference>
<dbReference type="GO" id="GO:0006220">
    <property type="term" value="P:pyrimidine nucleotide metabolic process"/>
    <property type="evidence" value="ECO:0007669"/>
    <property type="project" value="UniProtKB-UniRule"/>
</dbReference>
<dbReference type="CDD" id="cd02020">
    <property type="entry name" value="CMPK"/>
    <property type="match status" value="1"/>
</dbReference>
<dbReference type="Gene3D" id="3.40.50.300">
    <property type="entry name" value="P-loop containing nucleotide triphosphate hydrolases"/>
    <property type="match status" value="1"/>
</dbReference>
<dbReference type="HAMAP" id="MF_00238">
    <property type="entry name" value="Cytidyl_kinase_type1"/>
    <property type="match status" value="1"/>
</dbReference>
<dbReference type="InterPro" id="IPR003136">
    <property type="entry name" value="Cytidylate_kin"/>
</dbReference>
<dbReference type="InterPro" id="IPR011994">
    <property type="entry name" value="Cytidylate_kinase_dom"/>
</dbReference>
<dbReference type="InterPro" id="IPR027417">
    <property type="entry name" value="P-loop_NTPase"/>
</dbReference>
<dbReference type="NCBIfam" id="TIGR00017">
    <property type="entry name" value="cmk"/>
    <property type="match status" value="1"/>
</dbReference>
<dbReference type="PANTHER" id="PTHR21299:SF2">
    <property type="entry name" value="CYTIDYLATE KINASE"/>
    <property type="match status" value="1"/>
</dbReference>
<dbReference type="PANTHER" id="PTHR21299">
    <property type="entry name" value="CYTIDYLATE KINASE/PANTOATE-BETA-ALANINE LIGASE"/>
    <property type="match status" value="1"/>
</dbReference>
<dbReference type="Pfam" id="PF02224">
    <property type="entry name" value="Cytidylate_kin"/>
    <property type="match status" value="1"/>
</dbReference>
<dbReference type="SUPFAM" id="SSF52540">
    <property type="entry name" value="P-loop containing nucleoside triphosphate hydrolases"/>
    <property type="match status" value="1"/>
</dbReference>
<accession>A3M504</accession>
<gene>
    <name evidence="1" type="primary">cmk</name>
    <name type="ordered locus">A1S_1571</name>
</gene>
<keyword id="KW-0067">ATP-binding</keyword>
<keyword id="KW-0963">Cytoplasm</keyword>
<keyword id="KW-0418">Kinase</keyword>
<keyword id="KW-0547">Nucleotide-binding</keyword>
<keyword id="KW-0808">Transferase</keyword>
<comment type="catalytic activity">
    <reaction evidence="1">
        <text>CMP + ATP = CDP + ADP</text>
        <dbReference type="Rhea" id="RHEA:11600"/>
        <dbReference type="ChEBI" id="CHEBI:30616"/>
        <dbReference type="ChEBI" id="CHEBI:58069"/>
        <dbReference type="ChEBI" id="CHEBI:60377"/>
        <dbReference type="ChEBI" id="CHEBI:456216"/>
        <dbReference type="EC" id="2.7.4.25"/>
    </reaction>
</comment>
<comment type="catalytic activity">
    <reaction evidence="1">
        <text>dCMP + ATP = dCDP + ADP</text>
        <dbReference type="Rhea" id="RHEA:25094"/>
        <dbReference type="ChEBI" id="CHEBI:30616"/>
        <dbReference type="ChEBI" id="CHEBI:57566"/>
        <dbReference type="ChEBI" id="CHEBI:58593"/>
        <dbReference type="ChEBI" id="CHEBI:456216"/>
        <dbReference type="EC" id="2.7.4.25"/>
    </reaction>
</comment>
<comment type="subcellular location">
    <subcellularLocation>
        <location evidence="1">Cytoplasm</location>
    </subcellularLocation>
</comment>
<comment type="similarity">
    <text evidence="1">Belongs to the cytidylate kinase family. Type 1 subfamily.</text>
</comment>
<protein>
    <recommendedName>
        <fullName evidence="1">Cytidylate kinase</fullName>
        <shortName evidence="1">CK</shortName>
        <ecNumber evidence="1">2.7.4.25</ecNumber>
    </recommendedName>
    <alternativeName>
        <fullName evidence="1">Cytidine monophosphate kinase</fullName>
        <shortName evidence="1">CMP kinase</shortName>
    </alternativeName>
</protein>
<reference key="1">
    <citation type="journal article" date="2007" name="Genes Dev.">
        <title>New insights into Acinetobacter baumannii pathogenesis revealed by high-density pyrosequencing and transposon mutagenesis.</title>
        <authorList>
            <person name="Smith M.G."/>
            <person name="Gianoulis T.A."/>
            <person name="Pukatzki S."/>
            <person name="Mekalanos J.J."/>
            <person name="Ornston L.N."/>
            <person name="Gerstein M."/>
            <person name="Snyder M."/>
        </authorList>
    </citation>
    <scope>NUCLEOTIDE SEQUENCE [LARGE SCALE GENOMIC DNA]</scope>
    <source>
        <strain>ATCC 17978 / DSM 105126 / CIP 53.77 / LMG 1025 / NCDC KC755 / 5377</strain>
    </source>
</reference>
<organism>
    <name type="scientific">Acinetobacter baumannii (strain ATCC 17978 / DSM 105126 / CIP 53.77 / LMG 1025 / NCDC KC755 / 5377)</name>
    <dbReference type="NCBI Taxonomy" id="400667"/>
    <lineage>
        <taxon>Bacteria</taxon>
        <taxon>Pseudomonadati</taxon>
        <taxon>Pseudomonadota</taxon>
        <taxon>Gammaproteobacteria</taxon>
        <taxon>Moraxellales</taxon>
        <taxon>Moraxellaceae</taxon>
        <taxon>Acinetobacter</taxon>
        <taxon>Acinetobacter calcoaceticus/baumannii complex</taxon>
    </lineage>
</organism>